<gene>
    <name evidence="1" type="primary">prmA</name>
    <name type="ordered locus">VCM66_0278</name>
</gene>
<name>PRMA_VIBCM</name>
<proteinExistence type="inferred from homology"/>
<evidence type="ECO:0000255" key="1">
    <source>
        <dbReference type="HAMAP-Rule" id="MF_00735"/>
    </source>
</evidence>
<sequence length="295" mass="32255">MPWIQIKLNATNDNAEAIGDMLMEETGAVSVTFLDAKDTPVFEPLPGETRLWGDTDVVALYEADMDTSLILQQIKASNMLAEGFAHKVEQVEDKDWEREWMDNFHPMQFGRRLWICPSWREVPDPQAVNVMLDPGLAFGTGTHPTTALCLEWLDNLDLTGKTVIDFGCGSGILAIAAIKLGAAKVIGIDIDPQALLASKDNAARNGVEDQIEVYLPKDQPEGLVADVVVANILAGPLRELSPIIKGLLKPGGQLAMSGILDTQAESVAEFYRDDLELDPIAEKSEWCRISGRKLG</sequence>
<feature type="chain" id="PRO_1000148148" description="Ribosomal protein L11 methyltransferase">
    <location>
        <begin position="1"/>
        <end position="295"/>
    </location>
</feature>
<feature type="binding site" evidence="1">
    <location>
        <position position="146"/>
    </location>
    <ligand>
        <name>S-adenosyl-L-methionine</name>
        <dbReference type="ChEBI" id="CHEBI:59789"/>
    </ligand>
</feature>
<feature type="binding site" evidence="1">
    <location>
        <position position="167"/>
    </location>
    <ligand>
        <name>S-adenosyl-L-methionine</name>
        <dbReference type="ChEBI" id="CHEBI:59789"/>
    </ligand>
</feature>
<feature type="binding site" evidence="1">
    <location>
        <position position="189"/>
    </location>
    <ligand>
        <name>S-adenosyl-L-methionine</name>
        <dbReference type="ChEBI" id="CHEBI:59789"/>
    </ligand>
</feature>
<feature type="binding site" evidence="1">
    <location>
        <position position="231"/>
    </location>
    <ligand>
        <name>S-adenosyl-L-methionine</name>
        <dbReference type="ChEBI" id="CHEBI:59789"/>
    </ligand>
</feature>
<accession>C3LQP9</accession>
<keyword id="KW-0963">Cytoplasm</keyword>
<keyword id="KW-0489">Methyltransferase</keyword>
<keyword id="KW-0949">S-adenosyl-L-methionine</keyword>
<keyword id="KW-0808">Transferase</keyword>
<comment type="function">
    <text evidence="1">Methylates ribosomal protein L11.</text>
</comment>
<comment type="catalytic activity">
    <reaction evidence="1">
        <text>L-lysyl-[protein] + 3 S-adenosyl-L-methionine = N(6),N(6),N(6)-trimethyl-L-lysyl-[protein] + 3 S-adenosyl-L-homocysteine + 3 H(+)</text>
        <dbReference type="Rhea" id="RHEA:54192"/>
        <dbReference type="Rhea" id="RHEA-COMP:9752"/>
        <dbReference type="Rhea" id="RHEA-COMP:13826"/>
        <dbReference type="ChEBI" id="CHEBI:15378"/>
        <dbReference type="ChEBI" id="CHEBI:29969"/>
        <dbReference type="ChEBI" id="CHEBI:57856"/>
        <dbReference type="ChEBI" id="CHEBI:59789"/>
        <dbReference type="ChEBI" id="CHEBI:61961"/>
    </reaction>
</comment>
<comment type="subcellular location">
    <subcellularLocation>
        <location evidence="1">Cytoplasm</location>
    </subcellularLocation>
</comment>
<comment type="similarity">
    <text evidence="1">Belongs to the methyltransferase superfamily. PrmA family.</text>
</comment>
<reference key="1">
    <citation type="journal article" date="2008" name="PLoS ONE">
        <title>A recalibrated molecular clock and independent origins for the cholera pandemic clones.</title>
        <authorList>
            <person name="Feng L."/>
            <person name="Reeves P.R."/>
            <person name="Lan R."/>
            <person name="Ren Y."/>
            <person name="Gao C."/>
            <person name="Zhou Z."/>
            <person name="Ren Y."/>
            <person name="Cheng J."/>
            <person name="Wang W."/>
            <person name="Wang J."/>
            <person name="Qian W."/>
            <person name="Li D."/>
            <person name="Wang L."/>
        </authorList>
    </citation>
    <scope>NUCLEOTIDE SEQUENCE [LARGE SCALE GENOMIC DNA]</scope>
    <source>
        <strain>M66-2</strain>
    </source>
</reference>
<protein>
    <recommendedName>
        <fullName evidence="1">Ribosomal protein L11 methyltransferase</fullName>
        <shortName evidence="1">L11 Mtase</shortName>
        <ecNumber evidence="1">2.1.1.-</ecNumber>
    </recommendedName>
</protein>
<dbReference type="EC" id="2.1.1.-" evidence="1"/>
<dbReference type="EMBL" id="CP001233">
    <property type="protein sequence ID" value="ACP04607.1"/>
    <property type="molecule type" value="Genomic_DNA"/>
</dbReference>
<dbReference type="RefSeq" id="WP_001145806.1">
    <property type="nucleotide sequence ID" value="NC_012578.1"/>
</dbReference>
<dbReference type="SMR" id="C3LQP9"/>
<dbReference type="KEGG" id="vcm:VCM66_0278"/>
<dbReference type="HOGENOM" id="CLU_049382_4_1_6"/>
<dbReference type="Proteomes" id="UP000001217">
    <property type="component" value="Chromosome I"/>
</dbReference>
<dbReference type="GO" id="GO:0005829">
    <property type="term" value="C:cytosol"/>
    <property type="evidence" value="ECO:0007669"/>
    <property type="project" value="TreeGrafter"/>
</dbReference>
<dbReference type="GO" id="GO:0016279">
    <property type="term" value="F:protein-lysine N-methyltransferase activity"/>
    <property type="evidence" value="ECO:0007669"/>
    <property type="project" value="TreeGrafter"/>
</dbReference>
<dbReference type="GO" id="GO:0032259">
    <property type="term" value="P:methylation"/>
    <property type="evidence" value="ECO:0007669"/>
    <property type="project" value="UniProtKB-KW"/>
</dbReference>
<dbReference type="CDD" id="cd02440">
    <property type="entry name" value="AdoMet_MTases"/>
    <property type="match status" value="1"/>
</dbReference>
<dbReference type="Gene3D" id="3.40.50.150">
    <property type="entry name" value="Vaccinia Virus protein VP39"/>
    <property type="match status" value="1"/>
</dbReference>
<dbReference type="HAMAP" id="MF_00735">
    <property type="entry name" value="Methyltr_PrmA"/>
    <property type="match status" value="1"/>
</dbReference>
<dbReference type="InterPro" id="IPR050078">
    <property type="entry name" value="Ribosomal_L11_MeTrfase_PrmA"/>
</dbReference>
<dbReference type="InterPro" id="IPR004498">
    <property type="entry name" value="Ribosomal_PrmA_MeTrfase"/>
</dbReference>
<dbReference type="InterPro" id="IPR029063">
    <property type="entry name" value="SAM-dependent_MTases_sf"/>
</dbReference>
<dbReference type="NCBIfam" id="TIGR00406">
    <property type="entry name" value="prmA"/>
    <property type="match status" value="1"/>
</dbReference>
<dbReference type="PANTHER" id="PTHR43648">
    <property type="entry name" value="ELECTRON TRANSFER FLAVOPROTEIN BETA SUBUNIT LYSINE METHYLTRANSFERASE"/>
    <property type="match status" value="1"/>
</dbReference>
<dbReference type="PANTHER" id="PTHR43648:SF1">
    <property type="entry name" value="ELECTRON TRANSFER FLAVOPROTEIN BETA SUBUNIT LYSINE METHYLTRANSFERASE"/>
    <property type="match status" value="1"/>
</dbReference>
<dbReference type="Pfam" id="PF06325">
    <property type="entry name" value="PrmA"/>
    <property type="match status" value="1"/>
</dbReference>
<dbReference type="PIRSF" id="PIRSF000401">
    <property type="entry name" value="RPL11_MTase"/>
    <property type="match status" value="1"/>
</dbReference>
<dbReference type="SUPFAM" id="SSF53335">
    <property type="entry name" value="S-adenosyl-L-methionine-dependent methyltransferases"/>
    <property type="match status" value="1"/>
</dbReference>
<organism>
    <name type="scientific">Vibrio cholerae serotype O1 (strain M66-2)</name>
    <dbReference type="NCBI Taxonomy" id="579112"/>
    <lineage>
        <taxon>Bacteria</taxon>
        <taxon>Pseudomonadati</taxon>
        <taxon>Pseudomonadota</taxon>
        <taxon>Gammaproteobacteria</taxon>
        <taxon>Vibrionales</taxon>
        <taxon>Vibrionaceae</taxon>
        <taxon>Vibrio</taxon>
    </lineage>
</organism>